<comment type="function">
    <text evidence="1">Part of the ABC transporter complex MetNIQ involved in methionine import. Responsible for energy coupling to the transport system.</text>
</comment>
<comment type="catalytic activity">
    <reaction evidence="1">
        <text>L-methionine(out) + ATP + H2O = L-methionine(in) + ADP + phosphate + H(+)</text>
        <dbReference type="Rhea" id="RHEA:29779"/>
        <dbReference type="ChEBI" id="CHEBI:15377"/>
        <dbReference type="ChEBI" id="CHEBI:15378"/>
        <dbReference type="ChEBI" id="CHEBI:30616"/>
        <dbReference type="ChEBI" id="CHEBI:43474"/>
        <dbReference type="ChEBI" id="CHEBI:57844"/>
        <dbReference type="ChEBI" id="CHEBI:456216"/>
        <dbReference type="EC" id="7.4.2.11"/>
    </reaction>
</comment>
<comment type="catalytic activity">
    <reaction evidence="1">
        <text>D-methionine(out) + ATP + H2O = D-methionine(in) + ADP + phosphate + H(+)</text>
        <dbReference type="Rhea" id="RHEA:29767"/>
        <dbReference type="ChEBI" id="CHEBI:15377"/>
        <dbReference type="ChEBI" id="CHEBI:15378"/>
        <dbReference type="ChEBI" id="CHEBI:30616"/>
        <dbReference type="ChEBI" id="CHEBI:43474"/>
        <dbReference type="ChEBI" id="CHEBI:57932"/>
        <dbReference type="ChEBI" id="CHEBI:456216"/>
        <dbReference type="EC" id="7.4.2.11"/>
    </reaction>
</comment>
<comment type="subunit">
    <text evidence="1">The complex is composed of two ATP-binding proteins (MetN), two transmembrane proteins (MetI) and a solute-binding protein (MetQ).</text>
</comment>
<comment type="subcellular location">
    <subcellularLocation>
        <location evidence="1">Cell inner membrane</location>
        <topology evidence="1">Peripheral membrane protein</topology>
    </subcellularLocation>
</comment>
<comment type="similarity">
    <text evidence="1">Belongs to the ABC transporter superfamily. Methionine importer (TC 3.A.1.24) family.</text>
</comment>
<proteinExistence type="inferred from homology"/>
<feature type="chain" id="PRO_0000270351" description="Methionine import ATP-binding protein MetN 2">
    <location>
        <begin position="1"/>
        <end position="374"/>
    </location>
</feature>
<feature type="domain" description="ABC transporter" evidence="1">
    <location>
        <begin position="32"/>
        <end position="271"/>
    </location>
</feature>
<feature type="binding site" evidence="1">
    <location>
        <begin position="68"/>
        <end position="75"/>
    </location>
    <ligand>
        <name>ATP</name>
        <dbReference type="ChEBI" id="CHEBI:30616"/>
    </ligand>
</feature>
<keyword id="KW-0029">Amino-acid transport</keyword>
<keyword id="KW-0067">ATP-binding</keyword>
<keyword id="KW-0997">Cell inner membrane</keyword>
<keyword id="KW-1003">Cell membrane</keyword>
<keyword id="KW-0472">Membrane</keyword>
<keyword id="KW-0547">Nucleotide-binding</keyword>
<keyword id="KW-1278">Translocase</keyword>
<keyword id="KW-0813">Transport</keyword>
<sequence length="374" mass="41173">MTAAIQRRLDLSEPPALAQRTELHPELNRAHVRFVGLGKTYDGKQGTVAALQGIDLAIQRGEVFGIIGRSGAGKSSLIRTINRLEQPTSGRVLIDQVDIGEYDEDRLVALRRRIGMIFQHFNLMSAKTVWQNVELPLKVAGVPKEQREKKVRELLELVGLQAKHTAYPAQLSGGQKQRVGIARALVHDPDILLCDEATSALDPETTQSILGLLREINKRLGLTIMLITHEMAVIREICDRVVVLEHGRIVEQGPVWEVFGNPQHEVSQTLLAPLQHALPEELQSRLQVQPSSSDASVVLRLQFTGSQQDEPDLAALFAALGGRVKLLQGGVERIQGHALGQLLLAVAGSQLNAEQLRERAGQWAQRTEVLGYVV</sequence>
<dbReference type="EC" id="7.4.2.11" evidence="1"/>
<dbReference type="EMBL" id="CP000094">
    <property type="protein sequence ID" value="ABA71980.1"/>
    <property type="molecule type" value="Genomic_DNA"/>
</dbReference>
<dbReference type="RefSeq" id="WP_011331941.1">
    <property type="nucleotide sequence ID" value="NC_007492.2"/>
</dbReference>
<dbReference type="SMR" id="Q3KJS6"/>
<dbReference type="KEGG" id="pfo:Pfl01_0236"/>
<dbReference type="eggNOG" id="COG1135">
    <property type="taxonomic scope" value="Bacteria"/>
</dbReference>
<dbReference type="HOGENOM" id="CLU_000604_1_3_6"/>
<dbReference type="Proteomes" id="UP000002704">
    <property type="component" value="Chromosome"/>
</dbReference>
<dbReference type="GO" id="GO:0005886">
    <property type="term" value="C:plasma membrane"/>
    <property type="evidence" value="ECO:0007669"/>
    <property type="project" value="UniProtKB-SubCell"/>
</dbReference>
<dbReference type="GO" id="GO:0033232">
    <property type="term" value="F:ABC-type D-methionine transporter activity"/>
    <property type="evidence" value="ECO:0007669"/>
    <property type="project" value="UniProtKB-EC"/>
</dbReference>
<dbReference type="GO" id="GO:0005524">
    <property type="term" value="F:ATP binding"/>
    <property type="evidence" value="ECO:0007669"/>
    <property type="project" value="UniProtKB-KW"/>
</dbReference>
<dbReference type="GO" id="GO:0016887">
    <property type="term" value="F:ATP hydrolysis activity"/>
    <property type="evidence" value="ECO:0007669"/>
    <property type="project" value="InterPro"/>
</dbReference>
<dbReference type="CDD" id="cd03258">
    <property type="entry name" value="ABC_MetN_methionine_transporter"/>
    <property type="match status" value="1"/>
</dbReference>
<dbReference type="FunFam" id="3.40.50.300:FF:000056">
    <property type="entry name" value="Cell division ATP-binding protein FtsE"/>
    <property type="match status" value="1"/>
</dbReference>
<dbReference type="Gene3D" id="3.30.70.260">
    <property type="match status" value="1"/>
</dbReference>
<dbReference type="Gene3D" id="3.40.50.300">
    <property type="entry name" value="P-loop containing nucleotide triphosphate hydrolases"/>
    <property type="match status" value="1"/>
</dbReference>
<dbReference type="InterPro" id="IPR003593">
    <property type="entry name" value="AAA+_ATPase"/>
</dbReference>
<dbReference type="InterPro" id="IPR003439">
    <property type="entry name" value="ABC_transporter-like_ATP-bd"/>
</dbReference>
<dbReference type="InterPro" id="IPR017871">
    <property type="entry name" value="ABC_transporter-like_CS"/>
</dbReference>
<dbReference type="InterPro" id="IPR045865">
    <property type="entry name" value="ACT-like_dom_sf"/>
</dbReference>
<dbReference type="InterPro" id="IPR041701">
    <property type="entry name" value="MetN_ABC"/>
</dbReference>
<dbReference type="InterPro" id="IPR050086">
    <property type="entry name" value="MetN_ABC_transporter-like"/>
</dbReference>
<dbReference type="InterPro" id="IPR018449">
    <property type="entry name" value="NIL_domain"/>
</dbReference>
<dbReference type="InterPro" id="IPR027417">
    <property type="entry name" value="P-loop_NTPase"/>
</dbReference>
<dbReference type="PANTHER" id="PTHR43166">
    <property type="entry name" value="AMINO ACID IMPORT ATP-BINDING PROTEIN"/>
    <property type="match status" value="1"/>
</dbReference>
<dbReference type="PANTHER" id="PTHR43166:SF30">
    <property type="entry name" value="METHIONINE IMPORT ATP-BINDING PROTEIN METN"/>
    <property type="match status" value="1"/>
</dbReference>
<dbReference type="Pfam" id="PF00005">
    <property type="entry name" value="ABC_tran"/>
    <property type="match status" value="1"/>
</dbReference>
<dbReference type="Pfam" id="PF09383">
    <property type="entry name" value="NIL"/>
    <property type="match status" value="1"/>
</dbReference>
<dbReference type="SMART" id="SM00382">
    <property type="entry name" value="AAA"/>
    <property type="match status" value="1"/>
</dbReference>
<dbReference type="SMART" id="SM00930">
    <property type="entry name" value="NIL"/>
    <property type="match status" value="1"/>
</dbReference>
<dbReference type="SUPFAM" id="SSF55021">
    <property type="entry name" value="ACT-like"/>
    <property type="match status" value="1"/>
</dbReference>
<dbReference type="SUPFAM" id="SSF52540">
    <property type="entry name" value="P-loop containing nucleoside triphosphate hydrolases"/>
    <property type="match status" value="1"/>
</dbReference>
<dbReference type="PROSITE" id="PS00211">
    <property type="entry name" value="ABC_TRANSPORTER_1"/>
    <property type="match status" value="1"/>
</dbReference>
<dbReference type="PROSITE" id="PS50893">
    <property type="entry name" value="ABC_TRANSPORTER_2"/>
    <property type="match status" value="1"/>
</dbReference>
<dbReference type="PROSITE" id="PS51264">
    <property type="entry name" value="METN"/>
    <property type="match status" value="1"/>
</dbReference>
<name>METN2_PSEPF</name>
<reference key="1">
    <citation type="journal article" date="2009" name="Genome Biol.">
        <title>Genomic and genetic analyses of diversity and plant interactions of Pseudomonas fluorescens.</title>
        <authorList>
            <person name="Silby M.W."/>
            <person name="Cerdeno-Tarraga A.M."/>
            <person name="Vernikos G.S."/>
            <person name="Giddens S.R."/>
            <person name="Jackson R.W."/>
            <person name="Preston G.M."/>
            <person name="Zhang X.-X."/>
            <person name="Moon C.D."/>
            <person name="Gehrig S.M."/>
            <person name="Godfrey S.A.C."/>
            <person name="Knight C.G."/>
            <person name="Malone J.G."/>
            <person name="Robinson Z."/>
            <person name="Spiers A.J."/>
            <person name="Harris S."/>
            <person name="Challis G.L."/>
            <person name="Yaxley A.M."/>
            <person name="Harris D."/>
            <person name="Seeger K."/>
            <person name="Murphy L."/>
            <person name="Rutter S."/>
            <person name="Squares R."/>
            <person name="Quail M.A."/>
            <person name="Saunders E."/>
            <person name="Mavromatis K."/>
            <person name="Brettin T.S."/>
            <person name="Bentley S.D."/>
            <person name="Hothersall J."/>
            <person name="Stephens E."/>
            <person name="Thomas C.M."/>
            <person name="Parkhill J."/>
            <person name="Levy S.B."/>
            <person name="Rainey P.B."/>
            <person name="Thomson N.R."/>
        </authorList>
    </citation>
    <scope>NUCLEOTIDE SEQUENCE [LARGE SCALE GENOMIC DNA]</scope>
    <source>
        <strain>Pf0-1</strain>
    </source>
</reference>
<protein>
    <recommendedName>
        <fullName evidence="1">Methionine import ATP-binding protein MetN 2</fullName>
        <ecNumber evidence="1">7.4.2.11</ecNumber>
    </recommendedName>
</protein>
<evidence type="ECO:0000255" key="1">
    <source>
        <dbReference type="HAMAP-Rule" id="MF_01719"/>
    </source>
</evidence>
<accession>Q3KJS6</accession>
<gene>
    <name evidence="1" type="primary">metN2</name>
    <name type="ordered locus">Pfl01_0236</name>
</gene>
<organism>
    <name type="scientific">Pseudomonas fluorescens (strain Pf0-1)</name>
    <dbReference type="NCBI Taxonomy" id="205922"/>
    <lineage>
        <taxon>Bacteria</taxon>
        <taxon>Pseudomonadati</taxon>
        <taxon>Pseudomonadota</taxon>
        <taxon>Gammaproteobacteria</taxon>
        <taxon>Pseudomonadales</taxon>
        <taxon>Pseudomonadaceae</taxon>
        <taxon>Pseudomonas</taxon>
    </lineage>
</organism>